<name>LSHB_BOVIN</name>
<accession>P04651</accession>
<feature type="signal peptide" evidence="2">
    <location>
        <begin position="1"/>
        <end position="20"/>
    </location>
</feature>
<feature type="chain" id="PRO_0000011719" description="Lutropin subunit beta" evidence="2">
    <location>
        <begin position="21"/>
        <end position="141"/>
    </location>
</feature>
<feature type="glycosylation site" id="CAR_000044" description="N-linked (GlcNAc...) asparagine">
    <location>
        <position position="33"/>
    </location>
</feature>
<feature type="disulfide bond" evidence="1">
    <location>
        <begin position="29"/>
        <end position="77"/>
    </location>
</feature>
<feature type="disulfide bond" evidence="1">
    <location>
        <begin position="43"/>
        <end position="92"/>
    </location>
</feature>
<feature type="disulfide bond" evidence="1">
    <location>
        <begin position="46"/>
        <end position="130"/>
    </location>
</feature>
<feature type="disulfide bond" evidence="1">
    <location>
        <begin position="54"/>
        <end position="108"/>
    </location>
</feature>
<feature type="disulfide bond" evidence="1">
    <location>
        <begin position="58"/>
        <end position="110"/>
    </location>
</feature>
<feature type="disulfide bond" evidence="1">
    <location>
        <begin position="113"/>
        <end position="120"/>
    </location>
</feature>
<feature type="sequence conflict" description="In Ref. 2; AAA30623." evidence="3" ref="2">
    <location>
        <begin position="1"/>
        <end position="2"/>
    </location>
</feature>
<feature type="sequence conflict" description="In Ref. 3; AA sequence." evidence="3" ref="3">
    <original>Q</original>
    <variation>E</variation>
    <location>
        <position position="74"/>
    </location>
</feature>
<feature type="sequence conflict" description="In Ref. 2; AAA30623." evidence="3" ref="2">
    <original>P</original>
    <variation>S</variation>
    <location>
        <position position="112"/>
    </location>
</feature>
<feature type="sequence conflict" description="In Ref. 3; AA sequence." evidence="3" ref="3">
    <original>GP</original>
    <variation>PG</variation>
    <location>
        <begin position="122"/>
        <end position="123"/>
    </location>
</feature>
<feature type="sequence conflict" description="In Ref. 3; AA sequence." evidence="3" ref="3">
    <original>Q</original>
    <variation>E</variation>
    <location>
        <position position="126"/>
    </location>
</feature>
<feature type="strand" evidence="4">
    <location>
        <begin position="29"/>
        <end position="38"/>
    </location>
</feature>
<feature type="strand" evidence="4">
    <location>
        <begin position="47"/>
        <end position="55"/>
    </location>
</feature>
<feature type="strand" evidence="4">
    <location>
        <begin position="77"/>
        <end position="88"/>
    </location>
</feature>
<feature type="strand" evidence="4">
    <location>
        <begin position="99"/>
        <end position="110"/>
    </location>
</feature>
<feature type="strand" evidence="4">
    <location>
        <begin position="116"/>
        <end position="118"/>
    </location>
</feature>
<protein>
    <recommendedName>
        <fullName>Lutropin subunit beta</fullName>
    </recommendedName>
    <alternativeName>
        <fullName>Luteinizing hormone subunit beta</fullName>
        <shortName>LH-B</shortName>
        <shortName>LSH-B</shortName>
        <shortName>LSH-beta</shortName>
    </alternativeName>
    <alternativeName>
        <fullName>Lutropin beta chain</fullName>
    </alternativeName>
</protein>
<proteinExistence type="evidence at protein level"/>
<comment type="function">
    <text>Promotes spermatogenesis and ovulation by stimulating the testes and ovaries to synthesize steroids.</text>
</comment>
<comment type="subunit">
    <text>Heterodimer of a common alpha chain and a unique beta chain which confers biological specificity to thyrotropin, lutropin, follitropin and gonadotropin.</text>
</comment>
<comment type="subcellular location">
    <subcellularLocation>
        <location>Secreted</location>
    </subcellularLocation>
</comment>
<comment type="similarity">
    <text evidence="3">Belongs to the glycoprotein hormones subunit beta family.</text>
</comment>
<sequence length="141" mass="15202">MEMFQGLLLWLLLGVAGVWASRGPLRPLCQPINATLAAEKEACPVCITFTTSICAGYCPSMKRVLPVILPPMPQRVCTYHELRFASVRLPGCPPGVDPMVSFPVALSCHCGPCRLSSTDCGGPRTQPLACDHPPLPDILFL</sequence>
<dbReference type="EMBL" id="M10077">
    <property type="protein sequence ID" value="AAA30623.1"/>
    <property type="molecule type" value="mRNA"/>
</dbReference>
<dbReference type="EMBL" id="M11506">
    <property type="protein sequence ID" value="AAB59267.1"/>
    <property type="molecule type" value="Genomic_DNA"/>
</dbReference>
<dbReference type="PIR" id="A92534">
    <property type="entry name" value="UTBOB"/>
</dbReference>
<dbReference type="RefSeq" id="NP_776355.1">
    <property type="nucleotide sequence ID" value="NM_173930.1"/>
</dbReference>
<dbReference type="PDB" id="6P57">
    <property type="method" value="X-ray"/>
    <property type="resolution" value="3.16 A"/>
    <property type="chains" value="A/B=1-141"/>
</dbReference>
<dbReference type="PDBsum" id="6P57"/>
<dbReference type="SMR" id="P04651"/>
<dbReference type="FunCoup" id="P04651">
    <property type="interactions" value="193"/>
</dbReference>
<dbReference type="STRING" id="9913.ENSBTAP00000048635"/>
<dbReference type="GlyConnect" id="349">
    <property type="glycosylation" value="6 N-Linked glycans"/>
</dbReference>
<dbReference type="GlyConnect" id="353">
    <property type="glycosylation" value="2 N-Linked glycans (1 site)"/>
</dbReference>
<dbReference type="GlyCosmos" id="P04651">
    <property type="glycosylation" value="1 site, 16 glycans"/>
</dbReference>
<dbReference type="GlyGen" id="P04651">
    <property type="glycosylation" value="2 sites, 16 N-linked glycans (2 sites)"/>
</dbReference>
<dbReference type="PaxDb" id="9913-ENSBTAP00000048635"/>
<dbReference type="Ensembl" id="ENSBTAT00000057054.3">
    <property type="protein sequence ID" value="ENSBTAP00000048635.1"/>
    <property type="gene ID" value="ENSBTAG00000038735.3"/>
</dbReference>
<dbReference type="GeneID" id="280839"/>
<dbReference type="KEGG" id="bta:280839"/>
<dbReference type="CTD" id="3972"/>
<dbReference type="VEuPathDB" id="HostDB:ENSBTAG00000038735"/>
<dbReference type="eggNOG" id="ENOG502S49V">
    <property type="taxonomic scope" value="Eukaryota"/>
</dbReference>
<dbReference type="GeneTree" id="ENSGT00940000161285"/>
<dbReference type="HOGENOM" id="CLU_126319_0_0_1"/>
<dbReference type="InParanoid" id="P04651"/>
<dbReference type="OMA" id="FYIQAKN"/>
<dbReference type="OrthoDB" id="382863at2759"/>
<dbReference type="TreeFam" id="TF332940"/>
<dbReference type="Reactome" id="R-BTA-193048">
    <property type="pathway name" value="Androgen biosynthesis"/>
</dbReference>
<dbReference type="Reactome" id="R-BTA-193993">
    <property type="pathway name" value="Mineralocorticoid biosynthesis"/>
</dbReference>
<dbReference type="Reactome" id="R-BTA-209822">
    <property type="pathway name" value="Glycoprotein hormones"/>
</dbReference>
<dbReference type="Reactome" id="R-BTA-375281">
    <property type="pathway name" value="Hormone ligand-binding receptors"/>
</dbReference>
<dbReference type="Reactome" id="R-BTA-418555">
    <property type="pathway name" value="G alpha (s) signalling events"/>
</dbReference>
<dbReference type="Reactome" id="R-BTA-8866910">
    <property type="pathway name" value="TFAP2 (AP-2) family regulates transcription of growth factors and their receptors"/>
</dbReference>
<dbReference type="Reactome" id="R-BTA-975578">
    <property type="pathway name" value="Reactions specific to the complex N-glycan synthesis pathway"/>
</dbReference>
<dbReference type="Proteomes" id="UP000009136">
    <property type="component" value="Chromosome 18"/>
</dbReference>
<dbReference type="Bgee" id="ENSBTAG00000038735">
    <property type="expression patterns" value="Expressed in adenohypophysis and 78 other cell types or tissues"/>
</dbReference>
<dbReference type="GO" id="GO:0005737">
    <property type="term" value="C:cytoplasm"/>
    <property type="evidence" value="ECO:0000318"/>
    <property type="project" value="GO_Central"/>
</dbReference>
<dbReference type="GO" id="GO:0005615">
    <property type="term" value="C:extracellular space"/>
    <property type="evidence" value="ECO:0000314"/>
    <property type="project" value="AgBase"/>
</dbReference>
<dbReference type="GO" id="GO:0005179">
    <property type="term" value="F:hormone activity"/>
    <property type="evidence" value="ECO:0007669"/>
    <property type="project" value="UniProtKB-KW"/>
</dbReference>
<dbReference type="GO" id="GO:0007186">
    <property type="term" value="P:G protein-coupled receptor signaling pathway"/>
    <property type="evidence" value="ECO:0000318"/>
    <property type="project" value="GO_Central"/>
</dbReference>
<dbReference type="CDD" id="cd00069">
    <property type="entry name" value="GHB_like"/>
    <property type="match status" value="1"/>
</dbReference>
<dbReference type="FunFam" id="2.10.90.10:FF:000007">
    <property type="entry name" value="Luteinizing hormone beta subunit"/>
    <property type="match status" value="1"/>
</dbReference>
<dbReference type="Gene3D" id="2.10.90.10">
    <property type="entry name" value="Cystine-knot cytokines"/>
    <property type="match status" value="1"/>
</dbReference>
<dbReference type="InterPro" id="IPR029034">
    <property type="entry name" value="Cystine-knot_cytokine"/>
</dbReference>
<dbReference type="InterPro" id="IPR006208">
    <property type="entry name" value="Glyco_hormone_CN"/>
</dbReference>
<dbReference type="InterPro" id="IPR001545">
    <property type="entry name" value="Gonadotropin_bsu"/>
</dbReference>
<dbReference type="InterPro" id="IPR018245">
    <property type="entry name" value="Gonadotropin_bsu_CS"/>
</dbReference>
<dbReference type="PANTHER" id="PTHR11515">
    <property type="entry name" value="GLYCOPROTEIN HORMONE BETA CHAIN"/>
    <property type="match status" value="1"/>
</dbReference>
<dbReference type="PANTHER" id="PTHR11515:SF11">
    <property type="entry name" value="LUTROPIN SUBUNIT BETA"/>
    <property type="match status" value="1"/>
</dbReference>
<dbReference type="Pfam" id="PF00007">
    <property type="entry name" value="Cys_knot"/>
    <property type="match status" value="1"/>
</dbReference>
<dbReference type="SMART" id="SM00068">
    <property type="entry name" value="GHB"/>
    <property type="match status" value="1"/>
</dbReference>
<dbReference type="SUPFAM" id="SSF57501">
    <property type="entry name" value="Cystine-knot cytokines"/>
    <property type="match status" value="1"/>
</dbReference>
<dbReference type="PROSITE" id="PS00261">
    <property type="entry name" value="GLYCO_HORMONE_BETA_1"/>
    <property type="match status" value="1"/>
</dbReference>
<dbReference type="PROSITE" id="PS00689">
    <property type="entry name" value="GLYCO_HORMONE_BETA_2"/>
    <property type="match status" value="1"/>
</dbReference>
<evidence type="ECO:0000250" key="1"/>
<evidence type="ECO:0000269" key="2">
    <source>
    </source>
</evidence>
<evidence type="ECO:0000305" key="3"/>
<evidence type="ECO:0007829" key="4">
    <source>
        <dbReference type="PDB" id="6P57"/>
    </source>
</evidence>
<organism>
    <name type="scientific">Bos taurus</name>
    <name type="common">Bovine</name>
    <dbReference type="NCBI Taxonomy" id="9913"/>
    <lineage>
        <taxon>Eukaryota</taxon>
        <taxon>Metazoa</taxon>
        <taxon>Chordata</taxon>
        <taxon>Craniata</taxon>
        <taxon>Vertebrata</taxon>
        <taxon>Euteleostomi</taxon>
        <taxon>Mammalia</taxon>
        <taxon>Eutheria</taxon>
        <taxon>Laurasiatheria</taxon>
        <taxon>Artiodactyla</taxon>
        <taxon>Ruminantia</taxon>
        <taxon>Pecora</taxon>
        <taxon>Bovidae</taxon>
        <taxon>Bovinae</taxon>
        <taxon>Bos</taxon>
    </lineage>
</organism>
<reference key="1">
    <citation type="journal article" date="1985" name="J. Biol. Chem.">
        <title>The gene for the beta subunit of bovine luteinizing hormone encodes a gonadotropin mRNA with an unusually short 5'-untranslated region.</title>
        <authorList>
            <person name="Virgin J.B."/>
            <person name="Silver B.J."/>
            <person name="Thomason A.R."/>
            <person name="Nilson J.H."/>
        </authorList>
    </citation>
    <scope>NUCLEOTIDE SEQUENCE [GENOMIC DNA]</scope>
</reference>
<reference key="2">
    <citation type="journal article" date="1985" name="J. Biol. Chem.">
        <title>Analysis of several bovine lutropin beta subunit cDNAs reveals heterogeneity in nucleotide sequence.</title>
        <authorList>
            <person name="Maurer R.A."/>
        </authorList>
    </citation>
    <scope>NUCLEOTIDE SEQUENCE [MRNA]</scope>
</reference>
<reference key="3">
    <citation type="journal article" date="1973" name="Eur. J. Biochem.">
        <title>Luteinizing hormone. The primary structures of the beta-subunit from bovine and porcine species.</title>
        <authorList>
            <person name="Maghuin-Rogister G."/>
            <person name="Hennen G."/>
        </authorList>
    </citation>
    <scope>PROTEIN SEQUENCE OF 21-139</scope>
</reference>
<keyword id="KW-0002">3D-structure</keyword>
<keyword id="KW-0903">Direct protein sequencing</keyword>
<keyword id="KW-1015">Disulfide bond</keyword>
<keyword id="KW-0325">Glycoprotein</keyword>
<keyword id="KW-0372">Hormone</keyword>
<keyword id="KW-1185">Reference proteome</keyword>
<keyword id="KW-0964">Secreted</keyword>
<keyword id="KW-0732">Signal</keyword>
<gene>
    <name type="primary">LHB</name>
</gene>